<dbReference type="EMBL" id="D17510">
    <property type="protein sequence ID" value="BAA04396.1"/>
    <property type="molecule type" value="Genomic_DNA"/>
</dbReference>
<dbReference type="PIR" id="T07518">
    <property type="entry name" value="T07518"/>
</dbReference>
<dbReference type="RefSeq" id="NP_042439.1">
    <property type="nucleotide sequence ID" value="NC_001631.1"/>
</dbReference>
<dbReference type="SMR" id="P41630"/>
<dbReference type="GeneID" id="809017"/>
<dbReference type="GO" id="GO:0009507">
    <property type="term" value="C:chloroplast"/>
    <property type="evidence" value="ECO:0007669"/>
    <property type="project" value="UniProtKB-SubCell"/>
</dbReference>
<dbReference type="GO" id="GO:1990904">
    <property type="term" value="C:ribonucleoprotein complex"/>
    <property type="evidence" value="ECO:0007669"/>
    <property type="project" value="UniProtKB-KW"/>
</dbReference>
<dbReference type="GO" id="GO:0005840">
    <property type="term" value="C:ribosome"/>
    <property type="evidence" value="ECO:0007669"/>
    <property type="project" value="UniProtKB-KW"/>
</dbReference>
<dbReference type="GO" id="GO:0019843">
    <property type="term" value="F:rRNA binding"/>
    <property type="evidence" value="ECO:0007669"/>
    <property type="project" value="UniProtKB-UniRule"/>
</dbReference>
<dbReference type="GO" id="GO:0003735">
    <property type="term" value="F:structural constituent of ribosome"/>
    <property type="evidence" value="ECO:0007669"/>
    <property type="project" value="InterPro"/>
</dbReference>
<dbReference type="GO" id="GO:0006412">
    <property type="term" value="P:translation"/>
    <property type="evidence" value="ECO:0007669"/>
    <property type="project" value="UniProtKB-UniRule"/>
</dbReference>
<dbReference type="Gene3D" id="3.30.420.80">
    <property type="entry name" value="Ribosomal protein S11"/>
    <property type="match status" value="1"/>
</dbReference>
<dbReference type="HAMAP" id="MF_01310">
    <property type="entry name" value="Ribosomal_uS11"/>
    <property type="match status" value="1"/>
</dbReference>
<dbReference type="InterPro" id="IPR001971">
    <property type="entry name" value="Ribosomal_uS11"/>
</dbReference>
<dbReference type="InterPro" id="IPR019981">
    <property type="entry name" value="Ribosomal_uS11_bac-type"/>
</dbReference>
<dbReference type="InterPro" id="IPR018102">
    <property type="entry name" value="Ribosomal_uS11_CS"/>
</dbReference>
<dbReference type="InterPro" id="IPR036967">
    <property type="entry name" value="Ribosomal_uS11_sf"/>
</dbReference>
<dbReference type="NCBIfam" id="NF003698">
    <property type="entry name" value="PRK05309.1"/>
    <property type="match status" value="1"/>
</dbReference>
<dbReference type="NCBIfam" id="TIGR03632">
    <property type="entry name" value="uS11_bact"/>
    <property type="match status" value="1"/>
</dbReference>
<dbReference type="PANTHER" id="PTHR11759">
    <property type="entry name" value="40S RIBOSOMAL PROTEIN S14/30S RIBOSOMAL PROTEIN S11"/>
    <property type="match status" value="1"/>
</dbReference>
<dbReference type="Pfam" id="PF00411">
    <property type="entry name" value="Ribosomal_S11"/>
    <property type="match status" value="1"/>
</dbReference>
<dbReference type="PIRSF" id="PIRSF002131">
    <property type="entry name" value="Ribosomal_S11"/>
    <property type="match status" value="1"/>
</dbReference>
<dbReference type="SUPFAM" id="SSF53137">
    <property type="entry name" value="Translational machinery components"/>
    <property type="match status" value="1"/>
</dbReference>
<dbReference type="PROSITE" id="PS00054">
    <property type="entry name" value="RIBOSOMAL_S11"/>
    <property type="match status" value="1"/>
</dbReference>
<reference key="1">
    <citation type="journal article" date="1994" name="Proc. Natl. Acad. Sci. U.S.A.">
        <title>Loss of all ndh genes as determined by sequencing the entire chloroplast genome of the black pine Pinus thunbergii.</title>
        <authorList>
            <person name="Wakasugi T."/>
            <person name="Tsudzuki J."/>
            <person name="Ito S."/>
            <person name="Nakashima K."/>
            <person name="Tsudzuki T."/>
            <person name="Sugiura M."/>
        </authorList>
    </citation>
    <scope>NUCLEOTIDE SEQUENCE [LARGE SCALE GENOMIC DNA]</scope>
</reference>
<evidence type="ECO:0000255" key="1">
    <source>
        <dbReference type="HAMAP-Rule" id="MF_01310"/>
    </source>
</evidence>
<evidence type="ECO:0000305" key="2"/>
<accession>P41630</accession>
<name>RR11_PINTH</name>
<gene>
    <name evidence="1" type="primary">rps11</name>
</gene>
<geneLocation type="chloroplast"/>
<organism>
    <name type="scientific">Pinus thunbergii</name>
    <name type="common">Japanese black pine</name>
    <name type="synonym">Pinus thunbergiana</name>
    <dbReference type="NCBI Taxonomy" id="3350"/>
    <lineage>
        <taxon>Eukaryota</taxon>
        <taxon>Viridiplantae</taxon>
        <taxon>Streptophyta</taxon>
        <taxon>Embryophyta</taxon>
        <taxon>Tracheophyta</taxon>
        <taxon>Spermatophyta</taxon>
        <taxon>Pinopsida</taxon>
        <taxon>Pinidae</taxon>
        <taxon>Conifers I</taxon>
        <taxon>Pinales</taxon>
        <taxon>Pinaceae</taxon>
        <taxon>Pinus</taxon>
        <taxon>Pinus subgen. Pinus</taxon>
    </lineage>
</organism>
<protein>
    <recommendedName>
        <fullName evidence="1">Small ribosomal subunit protein uS11c</fullName>
    </recommendedName>
    <alternativeName>
        <fullName evidence="2">30S ribosomal protein S11, chloroplastic</fullName>
    </alternativeName>
</protein>
<comment type="subunit">
    <text evidence="1">Part of the 30S ribosomal subunit.</text>
</comment>
<comment type="subcellular location">
    <subcellularLocation>
        <location>Plastid</location>
        <location>Chloroplast</location>
    </subcellularLocation>
</comment>
<comment type="similarity">
    <text evidence="1">Belongs to the universal ribosomal protein uS11 family.</text>
</comment>
<sequence>MSKTIKRIGSRRNEHRVLKGVIYVQASFNNTIVTATDVRGQVLSWSSAGACGFKGTRRGTPFAAQTAAENVIRALMDRGMERVEVMISGPGRGRDTALRTIRRSGILLSFVRDVTPMPHNGCRPPKKRRV</sequence>
<feature type="chain" id="PRO_0000123322" description="Small ribosomal subunit protein uS11c">
    <location>
        <begin position="1"/>
        <end position="130"/>
    </location>
</feature>
<keyword id="KW-0150">Chloroplast</keyword>
<keyword id="KW-0934">Plastid</keyword>
<keyword id="KW-0687">Ribonucleoprotein</keyword>
<keyword id="KW-0689">Ribosomal protein</keyword>
<keyword id="KW-0694">RNA-binding</keyword>
<keyword id="KW-0699">rRNA-binding</keyword>
<proteinExistence type="inferred from homology"/>